<name>RL22_BACTN</name>
<keyword id="KW-1185">Reference proteome</keyword>
<keyword id="KW-0687">Ribonucleoprotein</keyword>
<keyword id="KW-0689">Ribosomal protein</keyword>
<keyword id="KW-0694">RNA-binding</keyword>
<keyword id="KW-0699">rRNA-binding</keyword>
<organism>
    <name type="scientific">Bacteroides thetaiotaomicron (strain ATCC 29148 / DSM 2079 / JCM 5827 / CCUG 10774 / NCTC 10582 / VPI-5482 / E50)</name>
    <dbReference type="NCBI Taxonomy" id="226186"/>
    <lineage>
        <taxon>Bacteria</taxon>
        <taxon>Pseudomonadati</taxon>
        <taxon>Bacteroidota</taxon>
        <taxon>Bacteroidia</taxon>
        <taxon>Bacteroidales</taxon>
        <taxon>Bacteroidaceae</taxon>
        <taxon>Bacteroides</taxon>
    </lineage>
</organism>
<gene>
    <name evidence="1" type="primary">rplV</name>
    <name type="ordered locus">BT_2722</name>
</gene>
<reference key="1">
    <citation type="journal article" date="2003" name="Science">
        <title>A genomic view of the human-Bacteroides thetaiotaomicron symbiosis.</title>
        <authorList>
            <person name="Xu J."/>
            <person name="Bjursell M.K."/>
            <person name="Himrod J."/>
            <person name="Deng S."/>
            <person name="Carmichael L.K."/>
            <person name="Chiang H.C."/>
            <person name="Hooper L.V."/>
            <person name="Gordon J.I."/>
        </authorList>
    </citation>
    <scope>NUCLEOTIDE SEQUENCE [LARGE SCALE GENOMIC DNA]</scope>
    <source>
        <strain>ATCC 29148 / DSM 2079 / JCM 5827 / CCUG 10774 / NCTC 10582 / VPI-5482 / E50</strain>
    </source>
</reference>
<protein>
    <recommendedName>
        <fullName evidence="1">Large ribosomal subunit protein uL22</fullName>
    </recommendedName>
    <alternativeName>
        <fullName evidence="2">50S ribosomal protein L22</fullName>
    </alternativeName>
</protein>
<accession>Q8A481</accession>
<comment type="function">
    <text evidence="1">This protein binds specifically to 23S rRNA; its binding is stimulated by other ribosomal proteins, e.g. L4, L17, and L20. It is important during the early stages of 50S assembly. It makes multiple contacts with different domains of the 23S rRNA in the assembled 50S subunit and ribosome (By similarity).</text>
</comment>
<comment type="function">
    <text evidence="1">The globular domain of the protein is located near the polypeptide exit tunnel on the outside of the subunit, while an extended beta-hairpin is found that lines the wall of the exit tunnel in the center of the 70S ribosome.</text>
</comment>
<comment type="subunit">
    <text evidence="1">Part of the 50S ribosomal subunit.</text>
</comment>
<comment type="similarity">
    <text evidence="1">Belongs to the universal ribosomal protein uL22 family.</text>
</comment>
<dbReference type="EMBL" id="AE015928">
    <property type="protein sequence ID" value="AAO77828.1"/>
    <property type="molecule type" value="Genomic_DNA"/>
</dbReference>
<dbReference type="RefSeq" id="NP_811634.1">
    <property type="nucleotide sequence ID" value="NC_004663.1"/>
</dbReference>
<dbReference type="RefSeq" id="WP_004296344.1">
    <property type="nucleotide sequence ID" value="NZ_UYXG01000001.1"/>
</dbReference>
<dbReference type="SMR" id="Q8A481"/>
<dbReference type="FunCoup" id="Q8A481">
    <property type="interactions" value="519"/>
</dbReference>
<dbReference type="STRING" id="226186.BT_2722"/>
<dbReference type="PaxDb" id="226186-BT_2722"/>
<dbReference type="EnsemblBacteria" id="AAO77828">
    <property type="protein sequence ID" value="AAO77828"/>
    <property type="gene ID" value="BT_2722"/>
</dbReference>
<dbReference type="GeneID" id="82188700"/>
<dbReference type="KEGG" id="bth:BT_2722"/>
<dbReference type="PATRIC" id="fig|226186.12.peg.2765"/>
<dbReference type="eggNOG" id="COG0091">
    <property type="taxonomic scope" value="Bacteria"/>
</dbReference>
<dbReference type="HOGENOM" id="CLU_083987_3_1_10"/>
<dbReference type="InParanoid" id="Q8A481"/>
<dbReference type="OrthoDB" id="9805969at2"/>
<dbReference type="Proteomes" id="UP000001414">
    <property type="component" value="Chromosome"/>
</dbReference>
<dbReference type="GO" id="GO:0022625">
    <property type="term" value="C:cytosolic large ribosomal subunit"/>
    <property type="evidence" value="ECO:0000318"/>
    <property type="project" value="GO_Central"/>
</dbReference>
<dbReference type="GO" id="GO:0019843">
    <property type="term" value="F:rRNA binding"/>
    <property type="evidence" value="ECO:0007669"/>
    <property type="project" value="UniProtKB-UniRule"/>
</dbReference>
<dbReference type="GO" id="GO:0003735">
    <property type="term" value="F:structural constituent of ribosome"/>
    <property type="evidence" value="ECO:0000318"/>
    <property type="project" value="GO_Central"/>
</dbReference>
<dbReference type="GO" id="GO:0006412">
    <property type="term" value="P:translation"/>
    <property type="evidence" value="ECO:0000318"/>
    <property type="project" value="GO_Central"/>
</dbReference>
<dbReference type="CDD" id="cd00336">
    <property type="entry name" value="Ribosomal_L22"/>
    <property type="match status" value="1"/>
</dbReference>
<dbReference type="FunFam" id="3.90.470.10:FF:000008">
    <property type="entry name" value="50S ribosomal protein L22"/>
    <property type="match status" value="1"/>
</dbReference>
<dbReference type="Gene3D" id="3.90.470.10">
    <property type="entry name" value="Ribosomal protein L22/L17"/>
    <property type="match status" value="1"/>
</dbReference>
<dbReference type="HAMAP" id="MF_01331_B">
    <property type="entry name" value="Ribosomal_uL22_B"/>
    <property type="match status" value="1"/>
</dbReference>
<dbReference type="InterPro" id="IPR001063">
    <property type="entry name" value="Ribosomal_uL22"/>
</dbReference>
<dbReference type="InterPro" id="IPR005727">
    <property type="entry name" value="Ribosomal_uL22_bac/chlpt-type"/>
</dbReference>
<dbReference type="InterPro" id="IPR047867">
    <property type="entry name" value="Ribosomal_uL22_bac/org-type"/>
</dbReference>
<dbReference type="InterPro" id="IPR036394">
    <property type="entry name" value="Ribosomal_uL22_sf"/>
</dbReference>
<dbReference type="NCBIfam" id="TIGR01044">
    <property type="entry name" value="rplV_bact"/>
    <property type="match status" value="1"/>
</dbReference>
<dbReference type="PANTHER" id="PTHR13501">
    <property type="entry name" value="CHLOROPLAST 50S RIBOSOMAL PROTEIN L22-RELATED"/>
    <property type="match status" value="1"/>
</dbReference>
<dbReference type="PANTHER" id="PTHR13501:SF8">
    <property type="entry name" value="LARGE RIBOSOMAL SUBUNIT PROTEIN UL22M"/>
    <property type="match status" value="1"/>
</dbReference>
<dbReference type="Pfam" id="PF00237">
    <property type="entry name" value="Ribosomal_L22"/>
    <property type="match status" value="1"/>
</dbReference>
<dbReference type="SUPFAM" id="SSF54843">
    <property type="entry name" value="Ribosomal protein L22"/>
    <property type="match status" value="1"/>
</dbReference>
<proteinExistence type="inferred from homology"/>
<sequence>MGARKKISAEKRKEALKTMYFAKLQNVPTSPRKMRLVADMIRGMEVNRALGVLKFSSKEAAARVEKLLRSAIANWEQKNERKAESGELFVTQIFVDGGATLKRMRPAPQGRGYRIRKRSNHVTLFVGAKSNNEDQN</sequence>
<feature type="chain" id="PRO_0000125120" description="Large ribosomal subunit protein uL22">
    <location>
        <begin position="1"/>
        <end position="136"/>
    </location>
</feature>
<evidence type="ECO:0000255" key="1">
    <source>
        <dbReference type="HAMAP-Rule" id="MF_01331"/>
    </source>
</evidence>
<evidence type="ECO:0000305" key="2"/>